<evidence type="ECO:0000250" key="1"/>
<evidence type="ECO:0000305" key="2"/>
<keyword id="KW-0349">Heme</keyword>
<keyword id="KW-0408">Iron</keyword>
<keyword id="KW-0479">Metal-binding</keyword>
<keyword id="KW-0503">Monooxygenase</keyword>
<keyword id="KW-0560">Oxidoreductase</keyword>
<keyword id="KW-1185">Reference proteome</keyword>
<accession>O18635</accession>
<comment type="cofactor">
    <cofactor evidence="1">
        <name>heme</name>
        <dbReference type="ChEBI" id="CHEBI:30413"/>
    </cofactor>
</comment>
<comment type="similarity">
    <text evidence="2">Belongs to the cytochrome P450 family.</text>
</comment>
<name>C12A2_MUSDO</name>
<gene>
    <name type="primary">CYP12A2</name>
</gene>
<feature type="chain" id="PRO_0000051923" description="Cytochrome P450 CYP12A2">
    <location>
        <begin position="1"/>
        <end position="537"/>
    </location>
</feature>
<feature type="binding site" description="axial binding residue" evidence="1">
    <location>
        <position position="483"/>
    </location>
    <ligand>
        <name>heme</name>
        <dbReference type="ChEBI" id="CHEBI:30413"/>
    </ligand>
    <ligandPart>
        <name>Fe</name>
        <dbReference type="ChEBI" id="CHEBI:18248"/>
    </ligandPart>
</feature>
<reference key="1">
    <citation type="submission" date="1997-03" db="EMBL/GenBank/DDBJ databases">
        <authorList>
            <person name="Guzov V.M."/>
            <person name="Feyereisen R."/>
        </authorList>
    </citation>
    <scope>NUCLEOTIDE SEQUENCE [MRNA]</scope>
    <source>
        <strain>Rutgers</strain>
    </source>
</reference>
<sequence length="537" mass="61709">MLKTKQQIIALNRFRCWTSNLPGLQQQCRNQSTVTAASSEWEQAKPLSEMPTISPFQLLRHFLPGGKYTNLDTTQLMLAFRRDFGPIVYFKGSLGKPDVVMTNNPHDFEKALHNQGIWPMRPGMEYLSYHRQVHRKDIFQGVEGLLGSQGEAWGSFRSAVNPVLMQPKNVHLYFNKMSEVNKEFMERIRKIRDPQTLEVPDNFEEEINRWTLESVSVVALDKQLGLITKNRDDPTPKRLFKALTDFFEASGDLEFQPSIWKYIKTPTFKKAIRSLDEITDITKMYVDEAFERIEAENKNRNVEKPENEKSVLEKLVKIDKQIAMVMAMDMLMAGVDTTSSTFTGLLLCLAKNPEKQKKLREEIMQLLPQKDSEFNEAVFKNMPYLRACIKESLRVYPLTVGNARTQANDVVISGYRVPKGTLISMNSVTLIKDDAHYPRASEFLPERWLRASKENEKSAECPHALKASSPFVYLPFGFGSRSCIGRRIAEMELELGIARLIRNFHVEFNYPTDNAFKSLLISVPNIPLKFKFTDVDN</sequence>
<dbReference type="EC" id="1.14.-.-"/>
<dbReference type="EMBL" id="U94698">
    <property type="protein sequence ID" value="AAC98527.1"/>
    <property type="molecule type" value="mRNA"/>
</dbReference>
<dbReference type="RefSeq" id="NP_001295932.1">
    <property type="nucleotide sequence ID" value="NM_001309003.1"/>
</dbReference>
<dbReference type="SMR" id="O18635"/>
<dbReference type="GeneID" id="101889857"/>
<dbReference type="KEGG" id="mde:101889857"/>
<dbReference type="CTD" id="101889857"/>
<dbReference type="VEuPathDB" id="VectorBase:MDOA006998"/>
<dbReference type="VEuPathDB" id="VectorBase:MDOMA2_014117"/>
<dbReference type="eggNOG" id="KOG0159">
    <property type="taxonomic scope" value="Eukaryota"/>
</dbReference>
<dbReference type="OrthoDB" id="3945418at2759"/>
<dbReference type="Proteomes" id="UP000694905">
    <property type="component" value="Unplaced"/>
</dbReference>
<dbReference type="GO" id="GO:0020037">
    <property type="term" value="F:heme binding"/>
    <property type="evidence" value="ECO:0007669"/>
    <property type="project" value="InterPro"/>
</dbReference>
<dbReference type="GO" id="GO:0005506">
    <property type="term" value="F:iron ion binding"/>
    <property type="evidence" value="ECO:0007669"/>
    <property type="project" value="InterPro"/>
</dbReference>
<dbReference type="GO" id="GO:0004497">
    <property type="term" value="F:monooxygenase activity"/>
    <property type="evidence" value="ECO:0007669"/>
    <property type="project" value="UniProtKB-KW"/>
</dbReference>
<dbReference type="GO" id="GO:0016705">
    <property type="term" value="F:oxidoreductase activity, acting on paired donors, with incorporation or reduction of molecular oxygen"/>
    <property type="evidence" value="ECO:0007669"/>
    <property type="project" value="InterPro"/>
</dbReference>
<dbReference type="CDD" id="cd11054">
    <property type="entry name" value="CYP24A1-like"/>
    <property type="match status" value="1"/>
</dbReference>
<dbReference type="FunFam" id="1.10.630.10:FF:000006">
    <property type="entry name" value="Cytochrome P450 302a1, mitochondrial"/>
    <property type="match status" value="1"/>
</dbReference>
<dbReference type="Gene3D" id="1.10.630.10">
    <property type="entry name" value="Cytochrome P450"/>
    <property type="match status" value="1"/>
</dbReference>
<dbReference type="InterPro" id="IPR050479">
    <property type="entry name" value="CYP11_CYP27_families"/>
</dbReference>
<dbReference type="InterPro" id="IPR001128">
    <property type="entry name" value="Cyt_P450"/>
</dbReference>
<dbReference type="InterPro" id="IPR017972">
    <property type="entry name" value="Cyt_P450_CS"/>
</dbReference>
<dbReference type="InterPro" id="IPR002401">
    <property type="entry name" value="Cyt_P450_E_grp-I"/>
</dbReference>
<dbReference type="InterPro" id="IPR036396">
    <property type="entry name" value="Cyt_P450_sf"/>
</dbReference>
<dbReference type="PANTHER" id="PTHR24279">
    <property type="entry name" value="CYTOCHROME P450"/>
    <property type="match status" value="1"/>
</dbReference>
<dbReference type="PANTHER" id="PTHR24279:SF120">
    <property type="entry name" value="CYTOCHROME P450"/>
    <property type="match status" value="1"/>
</dbReference>
<dbReference type="Pfam" id="PF00067">
    <property type="entry name" value="p450"/>
    <property type="match status" value="1"/>
</dbReference>
<dbReference type="PRINTS" id="PR00463">
    <property type="entry name" value="EP450I"/>
</dbReference>
<dbReference type="PRINTS" id="PR00385">
    <property type="entry name" value="P450"/>
</dbReference>
<dbReference type="SUPFAM" id="SSF48264">
    <property type="entry name" value="Cytochrome P450"/>
    <property type="match status" value="1"/>
</dbReference>
<dbReference type="PROSITE" id="PS00086">
    <property type="entry name" value="CYTOCHROME_P450"/>
    <property type="match status" value="1"/>
</dbReference>
<proteinExistence type="evidence at transcript level"/>
<protein>
    <recommendedName>
        <fullName>Cytochrome P450 CYP12A2</fullName>
        <ecNumber>1.14.-.-</ecNumber>
    </recommendedName>
    <alternativeName>
        <fullName>CYPXIIA2</fullName>
    </alternativeName>
</protein>
<organism>
    <name type="scientific">Musca domestica</name>
    <name type="common">House fly</name>
    <dbReference type="NCBI Taxonomy" id="7370"/>
    <lineage>
        <taxon>Eukaryota</taxon>
        <taxon>Metazoa</taxon>
        <taxon>Ecdysozoa</taxon>
        <taxon>Arthropoda</taxon>
        <taxon>Hexapoda</taxon>
        <taxon>Insecta</taxon>
        <taxon>Pterygota</taxon>
        <taxon>Neoptera</taxon>
        <taxon>Endopterygota</taxon>
        <taxon>Diptera</taxon>
        <taxon>Brachycera</taxon>
        <taxon>Muscomorpha</taxon>
        <taxon>Muscoidea</taxon>
        <taxon>Muscidae</taxon>
        <taxon>Musca</taxon>
    </lineage>
</organism>